<organismHost>
    <name type="scientific">Equus caballus</name>
    <name type="common">Horse</name>
    <dbReference type="NCBI Taxonomy" id="9796"/>
</organismHost>
<keyword id="KW-1185">Reference proteome</keyword>
<feature type="chain" id="PRO_0000406068" description="Gene 18 protein">
    <location>
        <begin position="1"/>
        <end position="257"/>
    </location>
</feature>
<dbReference type="EMBL" id="U20824">
    <property type="protein sequence ID" value="AAC13805.1"/>
    <property type="molecule type" value="Genomic_DNA"/>
</dbReference>
<dbReference type="PIR" id="S55612">
    <property type="entry name" value="S55612"/>
</dbReference>
<dbReference type="KEGG" id="vg:1461075"/>
<dbReference type="Proteomes" id="UP000007083">
    <property type="component" value="Segment"/>
</dbReference>
<dbReference type="InterPro" id="IPR004290">
    <property type="entry name" value="Herpes_UL79"/>
</dbReference>
<dbReference type="Pfam" id="PF03049">
    <property type="entry name" value="Herpes_UL79"/>
    <property type="match status" value="1"/>
</dbReference>
<reference key="1">
    <citation type="journal article" date="1995" name="J. Mol. Biol.">
        <title>The DNA sequence of equine herpesvirus 2.</title>
        <authorList>
            <person name="Telford E.A.R."/>
            <person name="Watson M.S."/>
            <person name="Aird H.C."/>
            <person name="Perry J."/>
            <person name="Davison A.J."/>
        </authorList>
    </citation>
    <scope>NUCLEOTIDE SEQUENCE [LARGE SCALE GENOMIC DNA]</scope>
</reference>
<proteinExistence type="inferred from homology"/>
<gene>
    <name type="primary">18</name>
</gene>
<name>UL79_EHV2</name>
<evidence type="ECO:0000305" key="1"/>
<organism>
    <name type="scientific">Equine herpesvirus 2 (strain 86/87)</name>
    <name type="common">EHV-2</name>
    <dbReference type="NCBI Taxonomy" id="82831"/>
    <lineage>
        <taxon>Viruses</taxon>
        <taxon>Duplodnaviria</taxon>
        <taxon>Heunggongvirae</taxon>
        <taxon>Peploviricota</taxon>
        <taxon>Herviviricetes</taxon>
        <taxon>Herpesvirales</taxon>
        <taxon>Orthoherpesviridae</taxon>
        <taxon>Gammaherpesvirinae</taxon>
        <taxon>Percavirus</taxon>
        <taxon>Percavirus equidgamma2</taxon>
        <taxon>Equid gammaherpesvirus 2</taxon>
    </lineage>
</organism>
<accession>Q66621</accession>
<comment type="similarity">
    <text evidence="1">Belongs to the herpesviridae UL79 family.</text>
</comment>
<protein>
    <recommendedName>
        <fullName>Gene 18 protein</fullName>
    </recommendedName>
</protein>
<sequence length="257" mass="29138">MFGKLVRPGRPMSSGVRELMWRVLRGTSLNNYSAAQLRFMHLILCKMYNYALNVLLFRETLANCACRDDCVLGRKVPPEIWRLVYDGCKEMGVTDEMLGEERRRAQLWMHFNANRALLEGLTNYVTHRLGVTHAVSVCSNNITDGNYLFNLGSVLPSRILMSIAYCLVFWGRQECEPWVRHFSSKVFILYLMVSGHLRLEGSFADASAACGYQGVVEVVMRDMRGYRGVEGPVAPGGEAPPTDTLDYLFVFNNNVLF</sequence>